<gene>
    <name evidence="1" type="primary">pgk</name>
    <name type="ordered locus">VV2858</name>
</gene>
<organism>
    <name type="scientific">Vibrio vulnificus (strain YJ016)</name>
    <dbReference type="NCBI Taxonomy" id="196600"/>
    <lineage>
        <taxon>Bacteria</taxon>
        <taxon>Pseudomonadati</taxon>
        <taxon>Pseudomonadota</taxon>
        <taxon>Gammaproteobacteria</taxon>
        <taxon>Vibrionales</taxon>
        <taxon>Vibrionaceae</taxon>
        <taxon>Vibrio</taxon>
    </lineage>
</organism>
<feature type="chain" id="PRO_0000146038" description="Phosphoglycerate kinase">
    <location>
        <begin position="1"/>
        <end position="386"/>
    </location>
</feature>
<feature type="binding site" evidence="1">
    <location>
        <begin position="21"/>
        <end position="23"/>
    </location>
    <ligand>
        <name>substrate</name>
    </ligand>
</feature>
<feature type="binding site" evidence="1">
    <location>
        <position position="36"/>
    </location>
    <ligand>
        <name>substrate</name>
    </ligand>
</feature>
<feature type="binding site" evidence="1">
    <location>
        <begin position="59"/>
        <end position="62"/>
    </location>
    <ligand>
        <name>substrate</name>
    </ligand>
</feature>
<feature type="binding site" evidence="1">
    <location>
        <position position="113"/>
    </location>
    <ligand>
        <name>substrate</name>
    </ligand>
</feature>
<feature type="binding site" evidence="1">
    <location>
        <position position="146"/>
    </location>
    <ligand>
        <name>substrate</name>
    </ligand>
</feature>
<feature type="binding site" evidence="1">
    <location>
        <position position="197"/>
    </location>
    <ligand>
        <name>ATP</name>
        <dbReference type="ChEBI" id="CHEBI:30616"/>
    </ligand>
</feature>
<feature type="binding site" evidence="1">
    <location>
        <position position="314"/>
    </location>
    <ligand>
        <name>ATP</name>
        <dbReference type="ChEBI" id="CHEBI:30616"/>
    </ligand>
</feature>
<feature type="binding site" evidence="1">
    <location>
        <begin position="340"/>
        <end position="343"/>
    </location>
    <ligand>
        <name>ATP</name>
        <dbReference type="ChEBI" id="CHEBI:30616"/>
    </ligand>
</feature>
<protein>
    <recommendedName>
        <fullName evidence="1">Phosphoglycerate kinase</fullName>
        <ecNumber evidence="1">2.7.2.3</ecNumber>
    </recommendedName>
</protein>
<dbReference type="EC" id="2.7.2.3" evidence="1"/>
<dbReference type="EMBL" id="BA000037">
    <property type="protein sequence ID" value="BAC95622.1"/>
    <property type="status" value="ALT_INIT"/>
    <property type="molecule type" value="Genomic_DNA"/>
</dbReference>
<dbReference type="RefSeq" id="WP_011079476.1">
    <property type="nucleotide sequence ID" value="NC_005139.1"/>
</dbReference>
<dbReference type="SMR" id="Q7MHL1"/>
<dbReference type="STRING" id="672.VV93_v1c25650"/>
<dbReference type="KEGG" id="vvy:VV2858"/>
<dbReference type="eggNOG" id="COG0126">
    <property type="taxonomic scope" value="Bacteria"/>
</dbReference>
<dbReference type="HOGENOM" id="CLU_025427_0_2_6"/>
<dbReference type="UniPathway" id="UPA00109">
    <property type="reaction ID" value="UER00185"/>
</dbReference>
<dbReference type="Proteomes" id="UP000002675">
    <property type="component" value="Chromosome I"/>
</dbReference>
<dbReference type="GO" id="GO:0005829">
    <property type="term" value="C:cytosol"/>
    <property type="evidence" value="ECO:0007669"/>
    <property type="project" value="TreeGrafter"/>
</dbReference>
<dbReference type="GO" id="GO:0043531">
    <property type="term" value="F:ADP binding"/>
    <property type="evidence" value="ECO:0007669"/>
    <property type="project" value="TreeGrafter"/>
</dbReference>
<dbReference type="GO" id="GO:0005524">
    <property type="term" value="F:ATP binding"/>
    <property type="evidence" value="ECO:0007669"/>
    <property type="project" value="UniProtKB-KW"/>
</dbReference>
<dbReference type="GO" id="GO:0004618">
    <property type="term" value="F:phosphoglycerate kinase activity"/>
    <property type="evidence" value="ECO:0007669"/>
    <property type="project" value="UniProtKB-UniRule"/>
</dbReference>
<dbReference type="GO" id="GO:0006094">
    <property type="term" value="P:gluconeogenesis"/>
    <property type="evidence" value="ECO:0007669"/>
    <property type="project" value="TreeGrafter"/>
</dbReference>
<dbReference type="GO" id="GO:0006096">
    <property type="term" value="P:glycolytic process"/>
    <property type="evidence" value="ECO:0007669"/>
    <property type="project" value="UniProtKB-UniRule"/>
</dbReference>
<dbReference type="FunFam" id="3.40.50.1260:FF:000001">
    <property type="entry name" value="Phosphoglycerate kinase"/>
    <property type="match status" value="1"/>
</dbReference>
<dbReference type="FunFam" id="3.40.50.1260:FF:000002">
    <property type="entry name" value="Phosphoglycerate kinase"/>
    <property type="match status" value="1"/>
</dbReference>
<dbReference type="Gene3D" id="3.40.50.1260">
    <property type="entry name" value="Phosphoglycerate kinase, N-terminal domain"/>
    <property type="match status" value="2"/>
</dbReference>
<dbReference type="HAMAP" id="MF_00145">
    <property type="entry name" value="Phosphoglyc_kinase"/>
    <property type="match status" value="1"/>
</dbReference>
<dbReference type="InterPro" id="IPR001576">
    <property type="entry name" value="Phosphoglycerate_kinase"/>
</dbReference>
<dbReference type="InterPro" id="IPR015911">
    <property type="entry name" value="Phosphoglycerate_kinase_CS"/>
</dbReference>
<dbReference type="InterPro" id="IPR015824">
    <property type="entry name" value="Phosphoglycerate_kinase_N"/>
</dbReference>
<dbReference type="InterPro" id="IPR036043">
    <property type="entry name" value="Phosphoglycerate_kinase_sf"/>
</dbReference>
<dbReference type="PANTHER" id="PTHR11406">
    <property type="entry name" value="PHOSPHOGLYCERATE KINASE"/>
    <property type="match status" value="1"/>
</dbReference>
<dbReference type="PANTHER" id="PTHR11406:SF23">
    <property type="entry name" value="PHOSPHOGLYCERATE KINASE 1, CHLOROPLASTIC-RELATED"/>
    <property type="match status" value="1"/>
</dbReference>
<dbReference type="Pfam" id="PF00162">
    <property type="entry name" value="PGK"/>
    <property type="match status" value="1"/>
</dbReference>
<dbReference type="PIRSF" id="PIRSF000724">
    <property type="entry name" value="Pgk"/>
    <property type="match status" value="1"/>
</dbReference>
<dbReference type="PRINTS" id="PR00477">
    <property type="entry name" value="PHGLYCKINASE"/>
</dbReference>
<dbReference type="SUPFAM" id="SSF53748">
    <property type="entry name" value="Phosphoglycerate kinase"/>
    <property type="match status" value="1"/>
</dbReference>
<dbReference type="PROSITE" id="PS00111">
    <property type="entry name" value="PGLYCERATE_KINASE"/>
    <property type="match status" value="1"/>
</dbReference>
<proteinExistence type="inferred from homology"/>
<accession>Q7MHL1</accession>
<reference key="1">
    <citation type="journal article" date="2003" name="Genome Res.">
        <title>Comparative genome analysis of Vibrio vulnificus, a marine pathogen.</title>
        <authorList>
            <person name="Chen C.-Y."/>
            <person name="Wu K.-M."/>
            <person name="Chang Y.-C."/>
            <person name="Chang C.-H."/>
            <person name="Tsai H.-C."/>
            <person name="Liao T.-L."/>
            <person name="Liu Y.-M."/>
            <person name="Chen H.-J."/>
            <person name="Shen A.B.-T."/>
            <person name="Li J.-C."/>
            <person name="Su T.-L."/>
            <person name="Shao C.-P."/>
            <person name="Lee C.-T."/>
            <person name="Hor L.-I."/>
            <person name="Tsai S.-F."/>
        </authorList>
    </citation>
    <scope>NUCLEOTIDE SEQUENCE [LARGE SCALE GENOMIC DNA]</scope>
    <source>
        <strain>YJ016</strain>
    </source>
</reference>
<comment type="catalytic activity">
    <reaction evidence="1">
        <text>(2R)-3-phosphoglycerate + ATP = (2R)-3-phospho-glyceroyl phosphate + ADP</text>
        <dbReference type="Rhea" id="RHEA:14801"/>
        <dbReference type="ChEBI" id="CHEBI:30616"/>
        <dbReference type="ChEBI" id="CHEBI:57604"/>
        <dbReference type="ChEBI" id="CHEBI:58272"/>
        <dbReference type="ChEBI" id="CHEBI:456216"/>
        <dbReference type="EC" id="2.7.2.3"/>
    </reaction>
</comment>
<comment type="pathway">
    <text evidence="1">Carbohydrate degradation; glycolysis; pyruvate from D-glyceraldehyde 3-phosphate: step 2/5.</text>
</comment>
<comment type="subunit">
    <text evidence="1">Monomer.</text>
</comment>
<comment type="subcellular location">
    <subcellularLocation>
        <location evidence="1">Cytoplasm</location>
    </subcellularLocation>
</comment>
<comment type="similarity">
    <text evidence="1">Belongs to the phosphoglycerate kinase family.</text>
</comment>
<comment type="sequence caution" evidence="2">
    <conflict type="erroneous initiation">
        <sequence resource="EMBL-CDS" id="BAC95622"/>
    </conflict>
</comment>
<name>PGK_VIBVY</name>
<sequence length="386" mass="40745">MSVIKMTDLDLAGKRVFIRADLNVPVKDGKVTSDARIIASLPTIKLCLEAGAKVMVTSHLGRPTEGEYAEEFSLQPVVNYLNDALDCEVKLAKDYLDGLELNAGELVVLENVRFNKGEKKNDEELSKKYAALCDVFVMDAFGTAHRAQASTHGVGMFAEVACAGPLLAAELEALGKAMSNPERPLVAIVGGSKVSTKLTVLESLSKIADQLVVGGGIANTFIAAEGHNVGKSLYEADLVETAQKLMKECAIPVATDVACAKAFDENAEAEIKHVSEVQDDDMIFDLGPDSTAALAEIIANAKTILWNGPVGVFEFKNFEAGTKGISEAIAQSPAFSVAGGGDTLAAIDKFGIKADVSYISTGGGAFLEFVEGKVLPAVEMLEARAK</sequence>
<evidence type="ECO:0000255" key="1">
    <source>
        <dbReference type="HAMAP-Rule" id="MF_00145"/>
    </source>
</evidence>
<evidence type="ECO:0000305" key="2"/>
<keyword id="KW-0067">ATP-binding</keyword>
<keyword id="KW-0963">Cytoplasm</keyword>
<keyword id="KW-0324">Glycolysis</keyword>
<keyword id="KW-0418">Kinase</keyword>
<keyword id="KW-0547">Nucleotide-binding</keyword>
<keyword id="KW-0808">Transferase</keyword>